<comment type="function">
    <text evidence="1">Together with the chaperonin GroEL, plays an essential role in assisting protein folding. The GroEL-GroES system forms a nano-cage that allows encapsulation of the non-native substrate proteins and provides a physical environment optimized to promote and accelerate protein folding. GroES binds to the apical surface of the GroEL ring, thereby capping the opening of the GroEL channel.</text>
</comment>
<comment type="subunit">
    <text evidence="1">Heptamer of 7 subunits arranged in a ring. Interacts with the chaperonin GroEL.</text>
</comment>
<comment type="subcellular location">
    <subcellularLocation>
        <location evidence="1">Cytoplasm</location>
    </subcellularLocation>
</comment>
<comment type="similarity">
    <text evidence="1">Belongs to the GroES chaperonin family.</text>
</comment>
<accession>Q93EU7</accession>
<protein>
    <recommendedName>
        <fullName evidence="1">Co-chaperonin GroES</fullName>
    </recommendedName>
    <alternativeName>
        <fullName evidence="1">10 kDa chaperonin</fullName>
    </alternativeName>
    <alternativeName>
        <fullName evidence="1">Chaperonin-10</fullName>
        <shortName evidence="1">Cpn10</shortName>
    </alternativeName>
</protein>
<gene>
    <name evidence="1" type="primary">groES</name>
    <name evidence="1" type="synonym">groS</name>
    <name type="ordered locus">EF_2634</name>
</gene>
<proteinExistence type="inferred from homology"/>
<reference key="1">
    <citation type="journal article" date="2001" name="J. Clin. Microbiol.">
        <title>Determination of Enterococcus faecalis groESL full-length sequence and application for species identification.</title>
        <authorList>
            <person name="Teng L.-J."/>
            <person name="Hsueh P.R."/>
            <person name="Wang Y.H."/>
            <person name="Lin H.M."/>
            <person name="Luh K.T."/>
            <person name="Ho S.W."/>
        </authorList>
    </citation>
    <scope>NUCLEOTIDE SEQUENCE [GENOMIC DNA]</scope>
    <source>
        <strain>ATCC 29212 / DSM 2570</strain>
    </source>
</reference>
<reference key="2">
    <citation type="journal article" date="2003" name="Science">
        <title>Role of mobile DNA in the evolution of vancomycin-resistant Enterococcus faecalis.</title>
        <authorList>
            <person name="Paulsen I.T."/>
            <person name="Banerjei L."/>
            <person name="Myers G.S.A."/>
            <person name="Nelson K.E."/>
            <person name="Seshadri R."/>
            <person name="Read T.D."/>
            <person name="Fouts D.E."/>
            <person name="Eisen J.A."/>
            <person name="Gill S.R."/>
            <person name="Heidelberg J.F."/>
            <person name="Tettelin H."/>
            <person name="Dodson R.J."/>
            <person name="Umayam L.A."/>
            <person name="Brinkac L.M."/>
            <person name="Beanan M.J."/>
            <person name="Daugherty S.C."/>
            <person name="DeBoy R.T."/>
            <person name="Durkin S.A."/>
            <person name="Kolonay J.F."/>
            <person name="Madupu R."/>
            <person name="Nelson W.C."/>
            <person name="Vamathevan J.J."/>
            <person name="Tran B."/>
            <person name="Upton J."/>
            <person name="Hansen T."/>
            <person name="Shetty J."/>
            <person name="Khouri H.M."/>
            <person name="Utterback T.R."/>
            <person name="Radune D."/>
            <person name="Ketchum K.A."/>
            <person name="Dougherty B.A."/>
            <person name="Fraser C.M."/>
        </authorList>
    </citation>
    <scope>NUCLEOTIDE SEQUENCE [LARGE SCALE GENOMIC DNA]</scope>
    <source>
        <strain>ATCC 700802 / V583</strain>
    </source>
</reference>
<evidence type="ECO:0000255" key="1">
    <source>
        <dbReference type="HAMAP-Rule" id="MF_00580"/>
    </source>
</evidence>
<evidence type="ECO:0000305" key="2"/>
<name>CH10_ENTFA</name>
<keyword id="KW-0143">Chaperone</keyword>
<keyword id="KW-0963">Cytoplasm</keyword>
<keyword id="KW-1185">Reference proteome</keyword>
<organism>
    <name type="scientific">Enterococcus faecalis (strain ATCC 700802 / V583)</name>
    <dbReference type="NCBI Taxonomy" id="226185"/>
    <lineage>
        <taxon>Bacteria</taxon>
        <taxon>Bacillati</taxon>
        <taxon>Bacillota</taxon>
        <taxon>Bacilli</taxon>
        <taxon>Lactobacillales</taxon>
        <taxon>Enterococcaceae</taxon>
        <taxon>Enterococcus</taxon>
    </lineage>
</organism>
<feature type="chain" id="PRO_0000174753" description="Co-chaperonin GroES">
    <location>
        <begin position="1"/>
        <end position="94"/>
    </location>
</feature>
<feature type="sequence conflict" description="In Ref. 1; AAL04032." evidence="2" ref="1">
    <original>K</original>
    <variation>Q</variation>
    <location>
        <position position="31"/>
    </location>
</feature>
<sequence length="94" mass="10165">MLKPLGDRVVIRVAKEEEKTVGGIVLASVAKEKPQTGEVIAVGEGRVLENGTKVPMEVKIGDTVMFEKYSGTEVKYEGVEYLIVSAKDIIATVE</sequence>
<dbReference type="EMBL" id="AF335185">
    <property type="protein sequence ID" value="AAL04032.1"/>
    <property type="molecule type" value="Genomic_DNA"/>
</dbReference>
<dbReference type="EMBL" id="AE016830">
    <property type="protein sequence ID" value="AAO82343.1"/>
    <property type="molecule type" value="Genomic_DNA"/>
</dbReference>
<dbReference type="RefSeq" id="NP_816273.1">
    <property type="nucleotide sequence ID" value="NC_004668.1"/>
</dbReference>
<dbReference type="RefSeq" id="WP_002356531.1">
    <property type="nucleotide sequence ID" value="NZ_KE136528.1"/>
</dbReference>
<dbReference type="SMR" id="Q93EU7"/>
<dbReference type="STRING" id="226185.EF_2634"/>
<dbReference type="EnsemblBacteria" id="AAO82343">
    <property type="protein sequence ID" value="AAO82343"/>
    <property type="gene ID" value="EF_2634"/>
</dbReference>
<dbReference type="GeneID" id="60894631"/>
<dbReference type="KEGG" id="efa:EF2634"/>
<dbReference type="PATRIC" id="fig|226185.45.peg.925"/>
<dbReference type="eggNOG" id="COG0234">
    <property type="taxonomic scope" value="Bacteria"/>
</dbReference>
<dbReference type="HOGENOM" id="CLU_132825_2_1_9"/>
<dbReference type="Proteomes" id="UP000001415">
    <property type="component" value="Chromosome"/>
</dbReference>
<dbReference type="GO" id="GO:0005737">
    <property type="term" value="C:cytoplasm"/>
    <property type="evidence" value="ECO:0007669"/>
    <property type="project" value="UniProtKB-SubCell"/>
</dbReference>
<dbReference type="GO" id="GO:0005524">
    <property type="term" value="F:ATP binding"/>
    <property type="evidence" value="ECO:0007669"/>
    <property type="project" value="InterPro"/>
</dbReference>
<dbReference type="GO" id="GO:0046872">
    <property type="term" value="F:metal ion binding"/>
    <property type="evidence" value="ECO:0007669"/>
    <property type="project" value="TreeGrafter"/>
</dbReference>
<dbReference type="GO" id="GO:0044183">
    <property type="term" value="F:protein folding chaperone"/>
    <property type="evidence" value="ECO:0007669"/>
    <property type="project" value="InterPro"/>
</dbReference>
<dbReference type="GO" id="GO:0051087">
    <property type="term" value="F:protein-folding chaperone binding"/>
    <property type="evidence" value="ECO:0007669"/>
    <property type="project" value="TreeGrafter"/>
</dbReference>
<dbReference type="GO" id="GO:0051082">
    <property type="term" value="F:unfolded protein binding"/>
    <property type="evidence" value="ECO:0007669"/>
    <property type="project" value="TreeGrafter"/>
</dbReference>
<dbReference type="GO" id="GO:0051085">
    <property type="term" value="P:chaperone cofactor-dependent protein refolding"/>
    <property type="evidence" value="ECO:0007669"/>
    <property type="project" value="TreeGrafter"/>
</dbReference>
<dbReference type="CDD" id="cd00320">
    <property type="entry name" value="cpn10"/>
    <property type="match status" value="1"/>
</dbReference>
<dbReference type="FunFam" id="2.30.33.40:FF:000001">
    <property type="entry name" value="10 kDa chaperonin"/>
    <property type="match status" value="1"/>
</dbReference>
<dbReference type="Gene3D" id="2.30.33.40">
    <property type="entry name" value="GroES chaperonin"/>
    <property type="match status" value="1"/>
</dbReference>
<dbReference type="HAMAP" id="MF_00580">
    <property type="entry name" value="CH10"/>
    <property type="match status" value="1"/>
</dbReference>
<dbReference type="InterPro" id="IPR020818">
    <property type="entry name" value="Chaperonin_GroES"/>
</dbReference>
<dbReference type="InterPro" id="IPR037124">
    <property type="entry name" value="Chaperonin_GroES_sf"/>
</dbReference>
<dbReference type="InterPro" id="IPR018369">
    <property type="entry name" value="Chaprnonin_Cpn10_CS"/>
</dbReference>
<dbReference type="InterPro" id="IPR011032">
    <property type="entry name" value="GroES-like_sf"/>
</dbReference>
<dbReference type="NCBIfam" id="NF001531">
    <property type="entry name" value="PRK00364.2-2"/>
    <property type="match status" value="1"/>
</dbReference>
<dbReference type="NCBIfam" id="NF001533">
    <property type="entry name" value="PRK00364.2-4"/>
    <property type="match status" value="1"/>
</dbReference>
<dbReference type="NCBIfam" id="NF001534">
    <property type="entry name" value="PRK00364.2-5"/>
    <property type="match status" value="1"/>
</dbReference>
<dbReference type="PANTHER" id="PTHR10772">
    <property type="entry name" value="10 KDA HEAT SHOCK PROTEIN"/>
    <property type="match status" value="1"/>
</dbReference>
<dbReference type="PANTHER" id="PTHR10772:SF58">
    <property type="entry name" value="CO-CHAPERONIN GROES"/>
    <property type="match status" value="1"/>
</dbReference>
<dbReference type="Pfam" id="PF00166">
    <property type="entry name" value="Cpn10"/>
    <property type="match status" value="1"/>
</dbReference>
<dbReference type="PRINTS" id="PR00297">
    <property type="entry name" value="CHAPERONIN10"/>
</dbReference>
<dbReference type="SMART" id="SM00883">
    <property type="entry name" value="Cpn10"/>
    <property type="match status" value="1"/>
</dbReference>
<dbReference type="SUPFAM" id="SSF50129">
    <property type="entry name" value="GroES-like"/>
    <property type="match status" value="1"/>
</dbReference>
<dbReference type="PROSITE" id="PS00681">
    <property type="entry name" value="CHAPERONINS_CPN10"/>
    <property type="match status" value="1"/>
</dbReference>